<proteinExistence type="evidence at protein level"/>
<reference key="1">
    <citation type="journal article" date="1997" name="Science">
        <title>The complete genome sequence of Escherichia coli K-12.</title>
        <authorList>
            <person name="Blattner F.R."/>
            <person name="Plunkett G. III"/>
            <person name="Bloch C.A."/>
            <person name="Perna N.T."/>
            <person name="Burland V."/>
            <person name="Riley M."/>
            <person name="Collado-Vides J."/>
            <person name="Glasner J.D."/>
            <person name="Rode C.K."/>
            <person name="Mayhew G.F."/>
            <person name="Gregor J."/>
            <person name="Davis N.W."/>
            <person name="Kirkpatrick H.A."/>
            <person name="Goeden M.A."/>
            <person name="Rose D.J."/>
            <person name="Mau B."/>
            <person name="Shao Y."/>
        </authorList>
    </citation>
    <scope>NUCLEOTIDE SEQUENCE [LARGE SCALE GENOMIC DNA]</scope>
    <source>
        <strain>K12 / MG1655 / ATCC 47076</strain>
    </source>
</reference>
<reference key="2">
    <citation type="journal article" date="2006" name="Mol. Syst. Biol.">
        <title>Highly accurate genome sequences of Escherichia coli K-12 strains MG1655 and W3110.</title>
        <authorList>
            <person name="Hayashi K."/>
            <person name="Morooka N."/>
            <person name="Yamamoto Y."/>
            <person name="Fujita K."/>
            <person name="Isono K."/>
            <person name="Choi S."/>
            <person name="Ohtsubo E."/>
            <person name="Baba T."/>
            <person name="Wanner B.L."/>
            <person name="Mori H."/>
            <person name="Horiuchi T."/>
        </authorList>
    </citation>
    <scope>NUCLEOTIDE SEQUENCE [LARGE SCALE GENOMIC DNA]</scope>
    <source>
        <strain>K12 / W3110 / ATCC 27325 / DSM 5911</strain>
    </source>
</reference>
<reference key="3">
    <citation type="journal article" date="2002" name="Biotechnol. Prog.">
        <title>Purification and identification of an Escherichia coli beta-keto ester reductase as 2,5-diketo-D-gluconate reductase YqhE.</title>
        <authorList>
            <person name="Habrych M."/>
            <person name="Rodriguez S."/>
            <person name="Stewart J.D."/>
        </authorList>
    </citation>
    <scope>PROTEIN SEQUENCE OF 2-21</scope>
    <scope>FUNCTION AS A BETA-KETO ESTER REDUCTASE</scope>
</reference>
<reference key="4">
    <citation type="journal article" date="1999" name="Appl. Environ. Microbiol.">
        <title>Identification of the yqhE and yafB genes encoding two 2,5-diketo-D-gluconate reductases in Escherichia coli.</title>
        <authorList>
            <person name="Yum D.-Y."/>
            <person name="Lee B.-Y."/>
            <person name="Pan J.-G."/>
        </authorList>
    </citation>
    <scope>FUNCTION</scope>
    <scope>CATALYTIC ACTIVITY</scope>
    <scope>BIOPHYSICOCHEMICAL PROPERTIES</scope>
    <scope>SUBUNIT</scope>
    <source>
        <strain>K12 / W3110 / ATCC 27325 / DSM 5911</strain>
    </source>
</reference>
<reference key="5">
    <citation type="journal article" date="2005" name="J. Bacteriol.">
        <title>Conversion of methylglyoxal to acetol by Escherichia coli aldo-keto reductases.</title>
        <authorList>
            <person name="Ko J."/>
            <person name="Kim I."/>
            <person name="Yoo S."/>
            <person name="Min B."/>
            <person name="Kim K."/>
            <person name="Park C."/>
        </authorList>
    </citation>
    <scope>FUNCTION</scope>
    <scope>CATALYTIC ACTIVITY</scope>
    <scope>BIOPHYSICOCHEMICAL PROPERTIES</scope>
    <scope>INDUCTION</scope>
    <source>
        <strain>K12 / MG1655 / ATCC 47076</strain>
    </source>
</reference>
<reference key="6">
    <citation type="journal article" date="2009" name="Appl. Environ. Microbiol.">
        <title>Silencing of NADPH-dependent oxidoreductase genes (yqhD and dkgA) in furfural-resistant ethanologenic Escherichia coli.</title>
        <authorList>
            <person name="Miller E.N."/>
            <person name="Jarboe L.R."/>
            <person name="Yomano L.P."/>
            <person name="York S.W."/>
            <person name="Shanmugam K.T."/>
            <person name="Ingram L.O."/>
        </authorList>
    </citation>
    <scope>FUNCTION</scope>
    <scope>CATALYTIC ACTIVITY</scope>
    <scope>BIOPHYSICOCHEMICAL PROPERTIES</scope>
    <source>
        <strain>KO11 / LY180</strain>
    </source>
</reference>
<reference key="7">
    <citation type="journal article" date="2011" name="J. Ind. Microbiol. Biotechnol.">
        <title>YqhC regulates transcription of the adjacent Escherichia coli genes yqhD and dkgA that are involved in furfural tolerance.</title>
        <authorList>
            <person name="Turner P.C."/>
            <person name="Miller E.N."/>
            <person name="Jarboe L.R."/>
            <person name="Baggett C.L."/>
            <person name="Shanmugam K.T."/>
            <person name="Ingram L.O."/>
        </authorList>
    </citation>
    <scope>INDUCTION</scope>
    <source>
        <strain>KO11 / LY180</strain>
    </source>
</reference>
<reference key="8">
    <citation type="journal article" date="2013" name="J. Microbiol.">
        <title>Glyoxal detoxification in Escherichia coli K-12 by NADPH dependent aldo-keto reductases.</title>
        <authorList>
            <person name="Lee C."/>
            <person name="Kim I."/>
            <person name="Park C."/>
        </authorList>
    </citation>
    <scope>FUNCTION</scope>
    <scope>CATALYTIC ACTIVITY</scope>
    <scope>BIOPHYSICOCHEMICAL PROPERTIES</scope>
    <scope>INDUCTION</scope>
    <scope>DISRUPTION PHENOTYPE</scope>
</reference>
<reference key="9">
    <citation type="journal article" date="2006" name="Proteins">
        <title>Crystal structure of Escherichia coli DkgA, a broad-specificity aldo-keto reductase.</title>
        <authorList>
            <person name="Jeudy S."/>
            <person name="Monchois V."/>
            <person name="Maza C."/>
            <person name="Claverie J.-M."/>
            <person name="Abergel C."/>
        </authorList>
    </citation>
    <scope>X-RAY CRYSTALLOGRAPHY (2.16 ANGSTROMS) OF 2-275</scope>
    <scope>FUNCTION</scope>
    <source>
        <strain>K12</strain>
    </source>
</reference>
<accession>Q46857</accession>
<accession>Q2M9I7</accession>
<organism>
    <name type="scientific">Escherichia coli (strain K12)</name>
    <dbReference type="NCBI Taxonomy" id="83333"/>
    <lineage>
        <taxon>Bacteria</taxon>
        <taxon>Pseudomonadati</taxon>
        <taxon>Pseudomonadota</taxon>
        <taxon>Gammaproteobacteria</taxon>
        <taxon>Enterobacterales</taxon>
        <taxon>Enterobacteriaceae</taxon>
        <taxon>Escherichia</taxon>
    </lineage>
</organism>
<dbReference type="EC" id="1.1.1.-" evidence="4 13"/>
<dbReference type="EC" id="1.1.1.346" evidence="2"/>
<dbReference type="EC" id="1.1.1.2" evidence="4 6 8"/>
<dbReference type="EMBL" id="U28377">
    <property type="protein sequence ID" value="AAA69179.1"/>
    <property type="status" value="ALT_FRAME"/>
    <property type="molecule type" value="Genomic_DNA"/>
</dbReference>
<dbReference type="EMBL" id="U00096">
    <property type="protein sequence ID" value="AAC76048.2"/>
    <property type="molecule type" value="Genomic_DNA"/>
</dbReference>
<dbReference type="EMBL" id="AP009048">
    <property type="protein sequence ID" value="BAE77069.1"/>
    <property type="molecule type" value="Genomic_DNA"/>
</dbReference>
<dbReference type="PIR" id="B65088">
    <property type="entry name" value="B65088"/>
</dbReference>
<dbReference type="RefSeq" id="NP_417485.4">
    <property type="nucleotide sequence ID" value="NC_000913.3"/>
</dbReference>
<dbReference type="RefSeq" id="WP_000013149.1">
    <property type="nucleotide sequence ID" value="NZ_SSZK01000023.1"/>
</dbReference>
<dbReference type="PDB" id="1MZR">
    <property type="method" value="X-ray"/>
    <property type="resolution" value="2.13 A"/>
    <property type="chains" value="A/B=2-275"/>
</dbReference>
<dbReference type="PDBsum" id="1MZR"/>
<dbReference type="SMR" id="Q46857"/>
<dbReference type="BioGRID" id="4262381">
    <property type="interactions" value="29"/>
</dbReference>
<dbReference type="FunCoup" id="Q46857">
    <property type="interactions" value="563"/>
</dbReference>
<dbReference type="STRING" id="511145.b3012"/>
<dbReference type="jPOST" id="Q46857"/>
<dbReference type="PaxDb" id="511145-b3012"/>
<dbReference type="DNASU" id="947495"/>
<dbReference type="EnsemblBacteria" id="AAC76048">
    <property type="protein sequence ID" value="AAC76048"/>
    <property type="gene ID" value="b3012"/>
</dbReference>
<dbReference type="GeneID" id="75203590"/>
<dbReference type="GeneID" id="947495"/>
<dbReference type="KEGG" id="ecj:JW5499"/>
<dbReference type="KEGG" id="eco:b3012"/>
<dbReference type="KEGG" id="ecoc:C3026_16465"/>
<dbReference type="PATRIC" id="fig|1411691.4.peg.3717"/>
<dbReference type="EchoBASE" id="EB2835"/>
<dbReference type="eggNOG" id="COG0656">
    <property type="taxonomic scope" value="Bacteria"/>
</dbReference>
<dbReference type="HOGENOM" id="CLU_023205_0_1_6"/>
<dbReference type="InParanoid" id="Q46857"/>
<dbReference type="OMA" id="YCLQKNW"/>
<dbReference type="OrthoDB" id="9804790at2"/>
<dbReference type="PhylomeDB" id="Q46857"/>
<dbReference type="BioCyc" id="EcoCyc:MONOMER0-148"/>
<dbReference type="BioCyc" id="MetaCyc:MONOMER0-148"/>
<dbReference type="BRENDA" id="1.1.1.346">
    <property type="organism ID" value="2026"/>
</dbReference>
<dbReference type="SABIO-RK" id="Q46857"/>
<dbReference type="EvolutionaryTrace" id="Q46857"/>
<dbReference type="PRO" id="PR:Q46857"/>
<dbReference type="Proteomes" id="UP000000625">
    <property type="component" value="Chromosome"/>
</dbReference>
<dbReference type="GO" id="GO:0005829">
    <property type="term" value="C:cytosol"/>
    <property type="evidence" value="ECO:0000314"/>
    <property type="project" value="EcoCyc"/>
</dbReference>
<dbReference type="GO" id="GO:0050580">
    <property type="term" value="F:2,5-didehydrogluconate reductase activity"/>
    <property type="evidence" value="ECO:0007669"/>
    <property type="project" value="UniProtKB-EC"/>
</dbReference>
<dbReference type="GO" id="GO:0008106">
    <property type="term" value="F:alcohol dehydrogenase (NADP+) activity"/>
    <property type="evidence" value="ECO:0000314"/>
    <property type="project" value="EcoCyc"/>
</dbReference>
<dbReference type="GO" id="GO:0004032">
    <property type="term" value="F:aldose reductase (NADPH) activity"/>
    <property type="evidence" value="ECO:0000318"/>
    <property type="project" value="GO_Central"/>
</dbReference>
<dbReference type="GO" id="GO:0016616">
    <property type="term" value="F:oxidoreductase activity, acting on the CH-OH group of donors, NAD or NADP as acceptor"/>
    <property type="evidence" value="ECO:0000314"/>
    <property type="project" value="EcoCyc"/>
</dbReference>
<dbReference type="GO" id="GO:0019853">
    <property type="term" value="P:L-ascorbic acid biosynthetic process"/>
    <property type="evidence" value="ECO:0007669"/>
    <property type="project" value="UniProtKB-KW"/>
</dbReference>
<dbReference type="GO" id="GO:0051596">
    <property type="term" value="P:methylglyoxal catabolic process"/>
    <property type="evidence" value="ECO:0000315"/>
    <property type="project" value="EcoCyc"/>
</dbReference>
<dbReference type="CDD" id="cd19131">
    <property type="entry name" value="AKR_AKR5C2"/>
    <property type="match status" value="1"/>
</dbReference>
<dbReference type="FunFam" id="3.20.20.100:FF:000002">
    <property type="entry name" value="2,5-diketo-D-gluconic acid reductase A"/>
    <property type="match status" value="1"/>
</dbReference>
<dbReference type="Gene3D" id="3.20.20.100">
    <property type="entry name" value="NADP-dependent oxidoreductase domain"/>
    <property type="match status" value="1"/>
</dbReference>
<dbReference type="InterPro" id="IPR020471">
    <property type="entry name" value="AKR"/>
</dbReference>
<dbReference type="InterPro" id="IPR044504">
    <property type="entry name" value="AKR5C2"/>
</dbReference>
<dbReference type="InterPro" id="IPR018170">
    <property type="entry name" value="Aldo/ket_reductase_CS"/>
</dbReference>
<dbReference type="InterPro" id="IPR023210">
    <property type="entry name" value="NADP_OxRdtase_dom"/>
</dbReference>
<dbReference type="InterPro" id="IPR036812">
    <property type="entry name" value="NADP_OxRdtase_dom_sf"/>
</dbReference>
<dbReference type="NCBIfam" id="NF008598">
    <property type="entry name" value="PRK11565.1"/>
    <property type="match status" value="1"/>
</dbReference>
<dbReference type="PANTHER" id="PTHR43827">
    <property type="entry name" value="2,5-DIKETO-D-GLUCONIC ACID REDUCTASE"/>
    <property type="match status" value="1"/>
</dbReference>
<dbReference type="PANTHER" id="PTHR43827:SF3">
    <property type="entry name" value="NADP-DEPENDENT OXIDOREDUCTASE DOMAIN-CONTAINING PROTEIN"/>
    <property type="match status" value="1"/>
</dbReference>
<dbReference type="Pfam" id="PF00248">
    <property type="entry name" value="Aldo_ket_red"/>
    <property type="match status" value="1"/>
</dbReference>
<dbReference type="PIRSF" id="PIRSF000097">
    <property type="entry name" value="AKR"/>
    <property type="match status" value="1"/>
</dbReference>
<dbReference type="PRINTS" id="PR00069">
    <property type="entry name" value="ALDKETRDTASE"/>
</dbReference>
<dbReference type="SUPFAM" id="SSF51430">
    <property type="entry name" value="NAD(P)-linked oxidoreductase"/>
    <property type="match status" value="1"/>
</dbReference>
<dbReference type="PROSITE" id="PS00798">
    <property type="entry name" value="ALDOKETO_REDUCTASE_1"/>
    <property type="match status" value="1"/>
</dbReference>
<dbReference type="PROSITE" id="PS00062">
    <property type="entry name" value="ALDOKETO_REDUCTASE_2"/>
    <property type="match status" value="1"/>
</dbReference>
<dbReference type="PROSITE" id="PS00063">
    <property type="entry name" value="ALDOKETO_REDUCTASE_3"/>
    <property type="match status" value="1"/>
</dbReference>
<feature type="initiator methionine" description="Removed" evidence="3">
    <location>
        <position position="1"/>
    </location>
</feature>
<feature type="chain" id="PRO_0000124599" description="Methylglyoxal reductase DkgA">
    <location>
        <begin position="2"/>
        <end position="275"/>
    </location>
</feature>
<feature type="active site" description="Proton donor" evidence="1">
    <location>
        <position position="51"/>
    </location>
</feature>
<feature type="binding site" evidence="1">
    <location>
        <position position="107"/>
    </location>
    <ligand>
        <name>substrate</name>
    </ligand>
</feature>
<feature type="binding site" evidence="1">
    <location>
        <begin position="187"/>
        <end position="241"/>
    </location>
    <ligand>
        <name>NADP(+)</name>
        <dbReference type="ChEBI" id="CHEBI:58349"/>
    </ligand>
</feature>
<feature type="sequence conflict" description="In Ref. 3; AA sequence." evidence="12" ref="3">
    <original>L</original>
    <variation>C</variation>
    <location>
        <position position="20"/>
    </location>
</feature>
<feature type="strand" evidence="14">
    <location>
        <begin position="6"/>
        <end position="8"/>
    </location>
</feature>
<feature type="strand" evidence="14">
    <location>
        <begin position="14"/>
        <end position="18"/>
    </location>
</feature>
<feature type="helix" evidence="14">
    <location>
        <begin position="27"/>
        <end position="40"/>
    </location>
</feature>
<feature type="strand" evidence="14">
    <location>
        <begin position="44"/>
        <end position="46"/>
    </location>
</feature>
<feature type="helix" evidence="14">
    <location>
        <begin position="49"/>
        <end position="51"/>
    </location>
</feature>
<feature type="helix" evidence="14">
    <location>
        <begin position="54"/>
        <end position="63"/>
    </location>
</feature>
<feature type="helix" evidence="14">
    <location>
        <begin position="68"/>
        <end position="70"/>
    </location>
</feature>
<feature type="strand" evidence="14">
    <location>
        <begin position="72"/>
        <end position="77"/>
    </location>
</feature>
<feature type="helix" evidence="14">
    <location>
        <begin position="79"/>
        <end position="81"/>
    </location>
</feature>
<feature type="helix" evidence="14">
    <location>
        <begin position="85"/>
        <end position="96"/>
    </location>
</feature>
<feature type="strand" evidence="14">
    <location>
        <begin position="101"/>
        <end position="107"/>
    </location>
</feature>
<feature type="turn" evidence="14">
    <location>
        <begin position="111"/>
        <end position="113"/>
    </location>
</feature>
<feature type="helix" evidence="14">
    <location>
        <begin position="116"/>
        <end position="128"/>
    </location>
</feature>
<feature type="strand" evidence="14">
    <location>
        <begin position="131"/>
        <end position="139"/>
    </location>
</feature>
<feature type="helix" evidence="14">
    <location>
        <begin position="142"/>
        <end position="152"/>
    </location>
</feature>
<feature type="strand" evidence="14">
    <location>
        <begin position="157"/>
        <end position="162"/>
    </location>
</feature>
<feature type="helix" evidence="14">
    <location>
        <begin position="170"/>
        <end position="178"/>
    </location>
</feature>
<feature type="strand" evidence="14">
    <location>
        <begin position="182"/>
        <end position="187"/>
    </location>
</feature>
<feature type="turn" evidence="14">
    <location>
        <begin position="188"/>
        <end position="192"/>
    </location>
</feature>
<feature type="turn" evidence="14">
    <location>
        <begin position="194"/>
        <end position="198"/>
    </location>
</feature>
<feature type="helix" evidence="14">
    <location>
        <begin position="200"/>
        <end position="209"/>
    </location>
</feature>
<feature type="helix" evidence="14">
    <location>
        <begin position="213"/>
        <end position="223"/>
    </location>
</feature>
<feature type="helix" evidence="14">
    <location>
        <begin position="235"/>
        <end position="240"/>
    </location>
</feature>
<feature type="helix" evidence="14">
    <location>
        <begin position="251"/>
        <end position="258"/>
    </location>
</feature>
<feature type="turn" evidence="14">
    <location>
        <begin position="270"/>
        <end position="274"/>
    </location>
</feature>
<gene>
    <name evidence="11" type="primary">dkgA</name>
    <name type="synonym">yqhE</name>
    <name type="ordered locus">b3012</name>
    <name type="ordered locus">JW5499</name>
</gene>
<keyword id="KW-0002">3D-structure</keyword>
<keyword id="KW-0963">Cytoplasm</keyword>
<keyword id="KW-0903">Direct protein sequencing</keyword>
<keyword id="KW-0521">NADP</keyword>
<keyword id="KW-0560">Oxidoreductase</keyword>
<keyword id="KW-1185">Reference proteome</keyword>
<sequence length="275" mass="31110">MANPTVIKLQDGNVMPQLGLGVWQASNEEVITAIQKALEVGYRSIDTAAAYKNEEGVGKALKNASVNREELFITTKLWNDDHKRPREALLDSLKKLQLDYIDLYLMHWPVPAIDHYVEAWKGMIELQKEGLIKSIGVCNFQIHHLQRLIDETGVTPVINQIELHPLMQQRQLHAWNATHKIQTESWSPLAQGGKGVFDQKVIRDLADKYGKTPAQIVIRWHLDSGLVVIPKSVTPSRIAENFDVWDFRLDKDELGEIAKLDQGKRLGPDPDQFGG</sequence>
<evidence type="ECO:0000250" key="1"/>
<evidence type="ECO:0000269" key="2">
    <source>
    </source>
</evidence>
<evidence type="ECO:0000269" key="3">
    <source>
    </source>
</evidence>
<evidence type="ECO:0000269" key="4">
    <source>
    </source>
</evidence>
<evidence type="ECO:0000269" key="5">
    <source>
    </source>
</evidence>
<evidence type="ECO:0000269" key="6">
    <source>
    </source>
</evidence>
<evidence type="ECO:0000269" key="7">
    <source>
    </source>
</evidence>
<evidence type="ECO:0000269" key="8">
    <source>
    </source>
</evidence>
<evidence type="ECO:0000303" key="9">
    <source>
    </source>
</evidence>
<evidence type="ECO:0000303" key="10">
    <source>
    </source>
</evidence>
<evidence type="ECO:0000303" key="11">
    <source>
    </source>
</evidence>
<evidence type="ECO:0000305" key="12"/>
<evidence type="ECO:0000305" key="13">
    <source>
    </source>
</evidence>
<evidence type="ECO:0007829" key="14">
    <source>
        <dbReference type="PDB" id="1MZR"/>
    </source>
</evidence>
<name>DKGA_ECOLI</name>
<protein>
    <recommendedName>
        <fullName evidence="12">Methylglyoxal reductase DkgA</fullName>
        <ecNumber evidence="4 13">1.1.1.-</ecNumber>
    </recommendedName>
    <alternativeName>
        <fullName evidence="9">2,5-diketo-D-gluconic acid reductase A</fullName>
        <shortName evidence="12">2,5-DKG reductase A</shortName>
        <shortName evidence="12">2,5-DKGR A</shortName>
        <shortName evidence="9">25DKGR-A</shortName>
        <ecNumber evidence="2">1.1.1.346</ecNumber>
    </alternativeName>
    <alternativeName>
        <fullName>AKR5C</fullName>
    </alternativeName>
    <alternativeName>
        <fullName evidence="12">Aldo-keto reductase YqhE</fullName>
        <ecNumber evidence="4 6 8">1.1.1.2</ecNumber>
    </alternativeName>
    <alternativeName>
        <fullName evidence="10">Beta-keto ester reductase</fullName>
    </alternativeName>
</protein>
<comment type="function">
    <text evidence="2 3 4 5 6 8">Aldo-keto reductase that significantly contributes to cellular methylglyoxal detoxification by catalyzing the NADPH-dependent conversion of methylglyoxal to acetol (PubMed:16077126, PubMed:16284956). It also exhibits fairly high activity with glyoxal (PubMed:23990306). Shows broad specificity and can use aromatic aldehydes such as 4-nitrobenzaldehyde, 3-nitrobenzaldehyde and benzaldehyde, and phenylglyoxal (PubMed:16077126). Shows beta-keto ester reductase activity toward ethyl acetoacetate and a variety of 2-substituted derivatives (PubMed:11934293). Also catalyzes the reduction of 2,5-diketo-D-gluconic acid (25DKG) to 2-keto-L-gulonic acid (2KLG) and could be involved in ketogluconate metabolism (PubMed:10427017). However, the specific activity of the enzyme toward 2,5-diketo-D-gluconate was reported to be almost 400-fold lower than its activity toward methylglyoxal (PubMed:16077126). Can catalyze in vitro the NADPH-dependent reduction of furfural, a natural product of lignocellulosic decomposition, to the less toxic product, furfuryl alcohol (PubMed:19429550). However, it is unlikely that furfural is a physiological substrate (PubMed:19429550).</text>
</comment>
<comment type="catalytic activity">
    <reaction evidence="4 13">
        <text>hydroxyacetone + NADP(+) = methylglyoxal + NADPH + H(+)</text>
        <dbReference type="Rhea" id="RHEA:27986"/>
        <dbReference type="ChEBI" id="CHEBI:15378"/>
        <dbReference type="ChEBI" id="CHEBI:17158"/>
        <dbReference type="ChEBI" id="CHEBI:27957"/>
        <dbReference type="ChEBI" id="CHEBI:57783"/>
        <dbReference type="ChEBI" id="CHEBI:58349"/>
    </reaction>
</comment>
<comment type="catalytic activity">
    <reaction evidence="4 6 8">
        <text>a primary alcohol + NADP(+) = an aldehyde + NADPH + H(+)</text>
        <dbReference type="Rhea" id="RHEA:15937"/>
        <dbReference type="ChEBI" id="CHEBI:15378"/>
        <dbReference type="ChEBI" id="CHEBI:15734"/>
        <dbReference type="ChEBI" id="CHEBI:17478"/>
        <dbReference type="ChEBI" id="CHEBI:57783"/>
        <dbReference type="ChEBI" id="CHEBI:58349"/>
        <dbReference type="EC" id="1.1.1.2"/>
    </reaction>
</comment>
<comment type="catalytic activity">
    <reaction evidence="2">
        <text>2-dehydro-L-idonate + NADP(+) = 2,5-didehydro-D-gluconate + NADPH + H(+)</text>
        <dbReference type="Rhea" id="RHEA:35111"/>
        <dbReference type="ChEBI" id="CHEBI:11449"/>
        <dbReference type="ChEBI" id="CHEBI:15378"/>
        <dbReference type="ChEBI" id="CHEBI:36602"/>
        <dbReference type="ChEBI" id="CHEBI:57783"/>
        <dbReference type="ChEBI" id="CHEBI:58349"/>
        <dbReference type="EC" id="1.1.1.346"/>
    </reaction>
</comment>
<comment type="biophysicochemical properties">
    <kinetics>
        <KM evidence="4">2.05 mM for methylglyoxal</KM>
        <KM evidence="8">22 mM for glyoxal</KM>
        <KM evidence="8">12 mM for glycolaldehyde</KM>
        <KM evidence="6">130 mM for furfural</KM>
        <KM evidence="6">0.023 mM for NADPH</KM>
        <text evidence="4 8">kcat is 1657 min(-1) with methylglyoxal as substrate (PubMed:16077126). kcat is 296 min(-1) with glyoxal as substrate (PubMed:23990306). kcat is 15 min(-1) with glycolaldehyde as substrate (PubMed:23990306).</text>
    </kinetics>
    <phDependence>
        <text evidence="2">Optimum pH is 7.5.</text>
    </phDependence>
</comment>
<comment type="subunit">
    <text evidence="2">Monomer.</text>
</comment>
<comment type="subcellular location">
    <subcellularLocation>
        <location evidence="12">Cytoplasm</location>
    </subcellularLocation>
</comment>
<comment type="induction">
    <text evidence="4 7 8">Expression is activated by the HTH-type transcriptional regulator YqhC (PubMed:20676725). Expression is not significantly altered upon methylglyoxal addition (PubMed:16077126). Induced by glyoxal (PubMed:23990306).</text>
</comment>
<comment type="disruption phenotype">
    <text evidence="8">The deletion mutant is not susceptible to glyoxal.</text>
</comment>
<comment type="similarity">
    <text evidence="12">Belongs to the aldo/keto reductase family.</text>
</comment>